<keyword id="KW-1185">Reference proteome</keyword>
<feature type="chain" id="PRO_1000061954" description="UPF0260 protein YcgN">
    <location>
        <begin position="1"/>
        <end position="153"/>
    </location>
</feature>
<name>YCGN_ECO24</name>
<reference key="1">
    <citation type="journal article" date="2008" name="J. Bacteriol.">
        <title>The pangenome structure of Escherichia coli: comparative genomic analysis of E. coli commensal and pathogenic isolates.</title>
        <authorList>
            <person name="Rasko D.A."/>
            <person name="Rosovitz M.J."/>
            <person name="Myers G.S.A."/>
            <person name="Mongodin E.F."/>
            <person name="Fricke W.F."/>
            <person name="Gajer P."/>
            <person name="Crabtree J."/>
            <person name="Sebaihia M."/>
            <person name="Thomson N.R."/>
            <person name="Chaudhuri R."/>
            <person name="Henderson I.R."/>
            <person name="Sperandio V."/>
            <person name="Ravel J."/>
        </authorList>
    </citation>
    <scope>NUCLEOTIDE SEQUENCE [LARGE SCALE GENOMIC DNA]</scope>
    <source>
        <strain>E24377A / ETEC</strain>
    </source>
</reference>
<comment type="similarity">
    <text evidence="1">Belongs to the UPF0260 family.</text>
</comment>
<sequence>MAEHLMSDVPFWQSKTLDEMSDAEWESLCDGCGQCCLHKLMDEDTDEIYFTNVACRQLNIKTCQCRNYERRFEFEPDCIKLTRENLPTFEWLPMTCAYRLLAEGKDLPAWHPLLTGSKAAMHGERISVRHIAVKESEVIDWQDHILNKPDWAQ</sequence>
<accession>A7ZKV2</accession>
<protein>
    <recommendedName>
        <fullName evidence="1">UPF0260 protein YcgN</fullName>
    </recommendedName>
</protein>
<organism>
    <name type="scientific">Escherichia coli O139:H28 (strain E24377A / ETEC)</name>
    <dbReference type="NCBI Taxonomy" id="331111"/>
    <lineage>
        <taxon>Bacteria</taxon>
        <taxon>Pseudomonadati</taxon>
        <taxon>Pseudomonadota</taxon>
        <taxon>Gammaproteobacteria</taxon>
        <taxon>Enterobacterales</taxon>
        <taxon>Enterobacteriaceae</taxon>
        <taxon>Escherichia</taxon>
    </lineage>
</organism>
<gene>
    <name evidence="1" type="primary">ycgN</name>
    <name type="ordered locus">EcE24377A_1325</name>
</gene>
<evidence type="ECO:0000255" key="1">
    <source>
        <dbReference type="HAMAP-Rule" id="MF_00676"/>
    </source>
</evidence>
<proteinExistence type="inferred from homology"/>
<dbReference type="EMBL" id="CP000800">
    <property type="protein sequence ID" value="ABV20509.1"/>
    <property type="molecule type" value="Genomic_DNA"/>
</dbReference>
<dbReference type="KEGG" id="ecw:EcE24377A_1325"/>
<dbReference type="HOGENOM" id="CLU_109769_2_0_6"/>
<dbReference type="Proteomes" id="UP000001122">
    <property type="component" value="Chromosome"/>
</dbReference>
<dbReference type="HAMAP" id="MF_00676">
    <property type="entry name" value="UPF0260"/>
    <property type="match status" value="1"/>
</dbReference>
<dbReference type="InterPro" id="IPR005358">
    <property type="entry name" value="Puta_zinc/iron-chelating_dom"/>
</dbReference>
<dbReference type="InterPro" id="IPR008228">
    <property type="entry name" value="UCP006173"/>
</dbReference>
<dbReference type="NCBIfam" id="NF003498">
    <property type="entry name" value="PRK05170.1-1"/>
    <property type="match status" value="1"/>
</dbReference>
<dbReference type="NCBIfam" id="NF003501">
    <property type="entry name" value="PRK05170.1-5"/>
    <property type="match status" value="1"/>
</dbReference>
<dbReference type="NCBIfam" id="NF003503">
    <property type="entry name" value="PRK05170.2-1"/>
    <property type="match status" value="1"/>
</dbReference>
<dbReference type="NCBIfam" id="NF003507">
    <property type="entry name" value="PRK05170.2-5"/>
    <property type="match status" value="1"/>
</dbReference>
<dbReference type="PANTHER" id="PTHR37421">
    <property type="entry name" value="UPF0260 PROTEIN YCGN"/>
    <property type="match status" value="1"/>
</dbReference>
<dbReference type="PANTHER" id="PTHR37421:SF1">
    <property type="entry name" value="UPF0260 PROTEIN YCGN"/>
    <property type="match status" value="1"/>
</dbReference>
<dbReference type="Pfam" id="PF03692">
    <property type="entry name" value="CxxCxxCC"/>
    <property type="match status" value="1"/>
</dbReference>
<dbReference type="PIRSF" id="PIRSF006173">
    <property type="entry name" value="UCP006173"/>
    <property type="match status" value="1"/>
</dbReference>